<reference key="1">
    <citation type="journal article" date="1997" name="Nature">
        <title>The nucleotide sequence of Saccharomyces cerevisiae chromosome IX.</title>
        <authorList>
            <person name="Churcher C.M."/>
            <person name="Bowman S."/>
            <person name="Badcock K."/>
            <person name="Bankier A.T."/>
            <person name="Brown D."/>
            <person name="Chillingworth T."/>
            <person name="Connor R."/>
            <person name="Devlin K."/>
            <person name="Gentles S."/>
            <person name="Hamlin N."/>
            <person name="Harris D.E."/>
            <person name="Horsnell T."/>
            <person name="Hunt S."/>
            <person name="Jagels K."/>
            <person name="Jones M."/>
            <person name="Lye G."/>
            <person name="Moule S."/>
            <person name="Odell C."/>
            <person name="Pearson D."/>
            <person name="Rajandream M.A."/>
            <person name="Rice P."/>
            <person name="Rowley N."/>
            <person name="Skelton J."/>
            <person name="Smith V."/>
            <person name="Walsh S.V."/>
            <person name="Whitehead S."/>
            <person name="Barrell B.G."/>
        </authorList>
    </citation>
    <scope>NUCLEOTIDE SEQUENCE [LARGE SCALE GENOMIC DNA]</scope>
    <source>
        <strain>ATCC 204508 / S288c</strain>
    </source>
</reference>
<reference key="2">
    <citation type="journal article" date="2014" name="G3 (Bethesda)">
        <title>The reference genome sequence of Saccharomyces cerevisiae: Then and now.</title>
        <authorList>
            <person name="Engel S.R."/>
            <person name="Dietrich F.S."/>
            <person name="Fisk D.G."/>
            <person name="Binkley G."/>
            <person name="Balakrishnan R."/>
            <person name="Costanzo M.C."/>
            <person name="Dwight S.S."/>
            <person name="Hitz B.C."/>
            <person name="Karra K."/>
            <person name="Nash R.S."/>
            <person name="Weng S."/>
            <person name="Wong E.D."/>
            <person name="Lloyd P."/>
            <person name="Skrzypek M.S."/>
            <person name="Miyasato S.R."/>
            <person name="Simison M."/>
            <person name="Cherry J.M."/>
        </authorList>
    </citation>
    <scope>GENOME REANNOTATION</scope>
    <source>
        <strain>ATCC 204508 / S288c</strain>
    </source>
</reference>
<reference key="3">
    <citation type="journal article" date="2001" name="J. Biol. Chem.">
        <title>A family of yeast proteins mediating bidirectional vacuolar amino acid transport.</title>
        <authorList>
            <person name="Russnak R."/>
            <person name="Konczal D."/>
            <person name="McIntire S.L."/>
        </authorList>
    </citation>
    <scope>FUNCTION</scope>
    <scope>SUBCELLULAR LOCATION</scope>
</reference>
<reference key="4">
    <citation type="journal article" date="2003" name="Nature">
        <title>Global analysis of protein expression in yeast.</title>
        <authorList>
            <person name="Ghaemmaghami S."/>
            <person name="Huh W.-K."/>
            <person name="Bower K."/>
            <person name="Howson R.W."/>
            <person name="Belle A."/>
            <person name="Dephoure N."/>
            <person name="O'Shea E.K."/>
            <person name="Weissman J.S."/>
        </authorList>
    </citation>
    <scope>LEVEL OF PROTEIN EXPRESSION [LARGE SCALE ANALYSIS]</scope>
</reference>
<reference key="5">
    <citation type="journal article" date="2006" name="Proc. Natl. Acad. Sci. U.S.A.">
        <title>A global topology map of the Saccharomyces cerevisiae membrane proteome.</title>
        <authorList>
            <person name="Kim H."/>
            <person name="Melen K."/>
            <person name="Oesterberg M."/>
            <person name="von Heijne G."/>
        </authorList>
    </citation>
    <scope>TOPOLOGY [LARGE SCALE ANALYSIS]</scope>
    <source>
        <strain>ATCC 208353 / W303-1A</strain>
    </source>
</reference>
<name>AVT7_YEAST</name>
<protein>
    <recommendedName>
        <fullName>Vacuolar amino acid transporter 7</fullName>
    </recommendedName>
</protein>
<evidence type="ECO:0000255" key="1"/>
<evidence type="ECO:0000256" key="2">
    <source>
        <dbReference type="SAM" id="MobiDB-lite"/>
    </source>
</evidence>
<evidence type="ECO:0000269" key="3">
    <source>
    </source>
</evidence>
<evidence type="ECO:0000269" key="4">
    <source>
    </source>
</evidence>
<evidence type="ECO:0000305" key="5"/>
<dbReference type="EMBL" id="Z46728">
    <property type="protein sequence ID" value="CAA86706.1"/>
    <property type="molecule type" value="Genomic_DNA"/>
</dbReference>
<dbReference type="EMBL" id="BK006942">
    <property type="protein sequence ID" value="DAA08465.1"/>
    <property type="molecule type" value="Genomic_DNA"/>
</dbReference>
<dbReference type="PIR" id="S49792">
    <property type="entry name" value="S49792"/>
</dbReference>
<dbReference type="RefSeq" id="NP_012178.1">
    <property type="nucleotide sequence ID" value="NM_001179436.1"/>
</dbReference>
<dbReference type="BioGRID" id="34905">
    <property type="interactions" value="62"/>
</dbReference>
<dbReference type="DIP" id="DIP-7299N"/>
<dbReference type="FunCoup" id="P40501">
    <property type="interactions" value="327"/>
</dbReference>
<dbReference type="IntAct" id="P40501">
    <property type="interactions" value="3"/>
</dbReference>
<dbReference type="STRING" id="4932.YIL088C"/>
<dbReference type="TCDB" id="2.A.18.6.19">
    <property type="family name" value="the amino acid/auxin permease (aaap) family"/>
</dbReference>
<dbReference type="iPTMnet" id="P40501"/>
<dbReference type="PaxDb" id="4932-YIL088C"/>
<dbReference type="PeptideAtlas" id="P40501"/>
<dbReference type="EnsemblFungi" id="YIL088C_mRNA">
    <property type="protein sequence ID" value="YIL088C"/>
    <property type="gene ID" value="YIL088C"/>
</dbReference>
<dbReference type="GeneID" id="854721"/>
<dbReference type="KEGG" id="sce:YIL088C"/>
<dbReference type="AGR" id="SGD:S000001350"/>
<dbReference type="SGD" id="S000001350">
    <property type="gene designation" value="AVT7"/>
</dbReference>
<dbReference type="VEuPathDB" id="FungiDB:YIL088C"/>
<dbReference type="eggNOG" id="KOG1305">
    <property type="taxonomic scope" value="Eukaryota"/>
</dbReference>
<dbReference type="HOGENOM" id="CLU_009020_1_1_1"/>
<dbReference type="InParanoid" id="P40501"/>
<dbReference type="OMA" id="FAFTGHQ"/>
<dbReference type="OrthoDB" id="438545at2759"/>
<dbReference type="BioCyc" id="YEAST:G3O-31348-MONOMER"/>
<dbReference type="BioGRID-ORCS" id="854721">
    <property type="hits" value="0 hits in 10 CRISPR screens"/>
</dbReference>
<dbReference type="PRO" id="PR:P40501"/>
<dbReference type="Proteomes" id="UP000002311">
    <property type="component" value="Chromosome IX"/>
</dbReference>
<dbReference type="RNAct" id="P40501">
    <property type="molecule type" value="protein"/>
</dbReference>
<dbReference type="GO" id="GO:0000324">
    <property type="term" value="C:fungal-type vacuole"/>
    <property type="evidence" value="ECO:0000314"/>
    <property type="project" value="SGD"/>
</dbReference>
<dbReference type="GO" id="GO:0000329">
    <property type="term" value="C:fungal-type vacuole membrane"/>
    <property type="evidence" value="ECO:0000318"/>
    <property type="project" value="GO_Central"/>
</dbReference>
<dbReference type="GO" id="GO:0005886">
    <property type="term" value="C:plasma membrane"/>
    <property type="evidence" value="ECO:0000314"/>
    <property type="project" value="SGD"/>
</dbReference>
<dbReference type="GO" id="GO:0005774">
    <property type="term" value="C:vacuolar membrane"/>
    <property type="evidence" value="ECO:0000314"/>
    <property type="project" value="SGD"/>
</dbReference>
<dbReference type="GO" id="GO:0015171">
    <property type="term" value="F:amino acid transmembrane transporter activity"/>
    <property type="evidence" value="ECO:0000247"/>
    <property type="project" value="SGD"/>
</dbReference>
<dbReference type="GO" id="GO:0061459">
    <property type="term" value="F:L-arginine transmembrane transporter activity"/>
    <property type="evidence" value="ECO:0000318"/>
    <property type="project" value="GO_Central"/>
</dbReference>
<dbReference type="GO" id="GO:0005313">
    <property type="term" value="F:L-glutamate transmembrane transporter activity"/>
    <property type="evidence" value="ECO:0000318"/>
    <property type="project" value="GO_Central"/>
</dbReference>
<dbReference type="GO" id="GO:0005290">
    <property type="term" value="F:L-histidine transmembrane transporter activity"/>
    <property type="evidence" value="ECO:0000318"/>
    <property type="project" value="GO_Central"/>
</dbReference>
<dbReference type="GO" id="GO:0015189">
    <property type="term" value="F:L-lysine transmembrane transporter activity"/>
    <property type="evidence" value="ECO:0000318"/>
    <property type="project" value="GO_Central"/>
</dbReference>
<dbReference type="GO" id="GO:0015194">
    <property type="term" value="F:L-serine transmembrane transporter activity"/>
    <property type="evidence" value="ECO:0000318"/>
    <property type="project" value="GO_Central"/>
</dbReference>
<dbReference type="GO" id="GO:0005302">
    <property type="term" value="F:L-tyrosine transmembrane transporter activity"/>
    <property type="evidence" value="ECO:0000318"/>
    <property type="project" value="GO_Central"/>
</dbReference>
<dbReference type="GO" id="GO:0003333">
    <property type="term" value="P:amino acid transmembrane transport"/>
    <property type="evidence" value="ECO:0000318"/>
    <property type="project" value="GO_Central"/>
</dbReference>
<dbReference type="GO" id="GO:0006865">
    <property type="term" value="P:amino acid transport"/>
    <property type="evidence" value="ECO:0000315"/>
    <property type="project" value="SGD"/>
</dbReference>
<dbReference type="GO" id="GO:0043937">
    <property type="term" value="P:regulation of sporulation"/>
    <property type="evidence" value="ECO:0000315"/>
    <property type="project" value="SGD"/>
</dbReference>
<dbReference type="InterPro" id="IPR013057">
    <property type="entry name" value="AA_transpt_TM"/>
</dbReference>
<dbReference type="PANTHER" id="PTHR22950">
    <property type="entry name" value="AMINO ACID TRANSPORTER"/>
    <property type="match status" value="1"/>
</dbReference>
<dbReference type="PANTHER" id="PTHR22950:SF224">
    <property type="entry name" value="VACUOLAR AMINO ACID TRANSPORTER 7"/>
    <property type="match status" value="1"/>
</dbReference>
<dbReference type="Pfam" id="PF01490">
    <property type="entry name" value="Aa_trans"/>
    <property type="match status" value="1"/>
</dbReference>
<organism>
    <name type="scientific">Saccharomyces cerevisiae (strain ATCC 204508 / S288c)</name>
    <name type="common">Baker's yeast</name>
    <dbReference type="NCBI Taxonomy" id="559292"/>
    <lineage>
        <taxon>Eukaryota</taxon>
        <taxon>Fungi</taxon>
        <taxon>Dikarya</taxon>
        <taxon>Ascomycota</taxon>
        <taxon>Saccharomycotina</taxon>
        <taxon>Saccharomycetes</taxon>
        <taxon>Saccharomycetales</taxon>
        <taxon>Saccharomycetaceae</taxon>
        <taxon>Saccharomyces</taxon>
    </lineage>
</organism>
<feature type="chain" id="PRO_0000093840" description="Vacuolar amino acid transporter 7">
    <location>
        <begin position="1"/>
        <end position="490"/>
    </location>
</feature>
<feature type="topological domain" description="Cytoplasmic" evidence="1">
    <location>
        <begin position="1"/>
        <end position="6"/>
    </location>
</feature>
<feature type="transmembrane region" description="Helical" evidence="1">
    <location>
        <begin position="7"/>
        <end position="27"/>
    </location>
</feature>
<feature type="topological domain" description="Vacuolar" evidence="1">
    <location>
        <begin position="28"/>
        <end position="34"/>
    </location>
</feature>
<feature type="transmembrane region" description="Helical" evidence="1">
    <location>
        <begin position="35"/>
        <end position="55"/>
    </location>
</feature>
<feature type="topological domain" description="Cytoplasmic" evidence="1">
    <location>
        <begin position="56"/>
        <end position="84"/>
    </location>
</feature>
<feature type="transmembrane region" description="Helical" evidence="1">
    <location>
        <begin position="85"/>
        <end position="105"/>
    </location>
</feature>
<feature type="topological domain" description="Vacuolar" evidence="1">
    <location>
        <begin position="106"/>
        <end position="108"/>
    </location>
</feature>
<feature type="transmembrane region" description="Helical" evidence="1">
    <location>
        <begin position="109"/>
        <end position="129"/>
    </location>
</feature>
<feature type="topological domain" description="Cytoplasmic" evidence="1">
    <location>
        <begin position="130"/>
        <end position="143"/>
    </location>
</feature>
<feature type="transmembrane region" description="Helical" evidence="1">
    <location>
        <begin position="144"/>
        <end position="164"/>
    </location>
</feature>
<feature type="topological domain" description="Vacuolar" evidence="1">
    <location>
        <begin position="165"/>
        <end position="190"/>
    </location>
</feature>
<feature type="transmembrane region" description="Helical" evidence="1">
    <location>
        <begin position="191"/>
        <end position="211"/>
    </location>
</feature>
<feature type="topological domain" description="Cytoplasmic" evidence="1">
    <location>
        <begin position="212"/>
        <end position="221"/>
    </location>
</feature>
<feature type="transmembrane region" description="Helical" evidence="1">
    <location>
        <begin position="222"/>
        <end position="242"/>
    </location>
</feature>
<feature type="topological domain" description="Vacuolar" evidence="1">
    <location>
        <begin position="243"/>
        <end position="264"/>
    </location>
</feature>
<feature type="transmembrane region" description="Helical" evidence="1">
    <location>
        <begin position="265"/>
        <end position="285"/>
    </location>
</feature>
<feature type="topological domain" description="Cytoplasmic" evidence="1">
    <location>
        <begin position="286"/>
        <end position="397"/>
    </location>
</feature>
<feature type="transmembrane region" description="Helical" evidence="1">
    <location>
        <begin position="398"/>
        <end position="418"/>
    </location>
</feature>
<feature type="topological domain" description="Vacuolar" evidence="1">
    <location>
        <begin position="419"/>
        <end position="428"/>
    </location>
</feature>
<feature type="transmembrane region" description="Helical" evidence="1">
    <location>
        <begin position="429"/>
        <end position="449"/>
    </location>
</feature>
<feature type="topological domain" description="Cytoplasmic" evidence="1">
    <location>
        <begin position="450"/>
        <end position="463"/>
    </location>
</feature>
<feature type="transmembrane region" description="Helical" evidence="1">
    <location>
        <begin position="464"/>
        <end position="484"/>
    </location>
</feature>
<feature type="topological domain" description="Vacuolar" evidence="1">
    <location>
        <begin position="485"/>
        <end position="490"/>
    </location>
</feature>
<feature type="region of interest" description="Disordered" evidence="2">
    <location>
        <begin position="355"/>
        <end position="374"/>
    </location>
</feature>
<feature type="compositionally biased region" description="Polar residues" evidence="2">
    <location>
        <begin position="357"/>
        <end position="368"/>
    </location>
</feature>
<keyword id="KW-0029">Amino-acid transport</keyword>
<keyword id="KW-0472">Membrane</keyword>
<keyword id="KW-1185">Reference proteome</keyword>
<keyword id="KW-0812">Transmembrane</keyword>
<keyword id="KW-1133">Transmembrane helix</keyword>
<keyword id="KW-0813">Transport</keyword>
<keyword id="KW-0926">Vacuole</keyword>
<comment type="function">
    <text evidence="3">Probable amino acid transporter of unknown specificity.</text>
</comment>
<comment type="subcellular location">
    <subcellularLocation>
        <location evidence="3">Vacuole membrane</location>
        <topology evidence="3">Multi-pass membrane protein</topology>
    </subcellularLocation>
</comment>
<comment type="miscellaneous">
    <text evidence="4">Present with 195 molecules/cell in log phase SD medium.</text>
</comment>
<comment type="similarity">
    <text evidence="5">Belongs to the amino acid/polyamine transporter 2 family.</text>
</comment>
<accession>P40501</accession>
<accession>D6VVJ9</accession>
<gene>
    <name type="primary">AVT7</name>
    <name type="ordered locus">YIL088C</name>
</gene>
<proteinExistence type="evidence at protein level"/>
<sequence length="490" mass="53737">MEATSSALSSTANLVKTIVGAGTLAIPYSFKSDGVLVGVILTLLAAVTSGLGLFVLSKCSKTLINPRNSSFFTLCMLTYPTLAPIFDLAMIVQCFGVGLSYLVLIGDLFPGLFGGERNYWIIASAVIIIPLCLVKKLDQLKYSSILGLFALAYISILVFSHFVFELGKGELTNILRNDICWWKIHDFKGLLSTFSIIIFAFTGSMNLFPMINELKDNSMENITFVINNSISLSTALFLIVGLSGYLTFGNETLGNLMLNYDPNSIWIVIGKFCLGSMLILSFPLLFHPLRIAVNNVIIWIEITYGGANPEEDPQVSEYTRASNLRPISMTVEDPAQPSDALDATSYNEQECLLPNGNFDNGSIESQENNNDERGTMAVAGDNEHHAPFVKSRFYWITALLLISMYTLALSVQSFALVLSFVGATGSTSISFTLPGLLGYKLIGLDSLAIGKMIPPKDRFYKRCSLLLVFYGLSVMFLSLYVTVFNRSDEA</sequence>